<protein>
    <recommendedName>
        <fullName>Alpha-1-antiproteinase 3</fullName>
    </recommendedName>
    <alternativeName>
        <fullName>Alpha-1-antitrypsin 3</fullName>
    </alternativeName>
    <alternativeName>
        <fullName>Alpha-1-proteinase inhibitor 3</fullName>
    </alternativeName>
    <alternativeName>
        <fullName>SPI3</fullName>
    </alternativeName>
</protein>
<comment type="subcellular location">
    <subcellularLocation>
        <location>Secreted</location>
    </subcellularLocation>
</comment>
<comment type="tissue specificity">
    <text>Plasma.</text>
</comment>
<comment type="domain">
    <text evidence="1">The reactive center loop (RCL) extends out from the body of the protein and directs binding to the target protease. The protease cleaves the serpin at the reactive site within the RCL, establishing a covalent linkage between the serpin reactive site and the active site of the protease. The resulting inactive serpin-protease complex is highly stable (By similarity).</text>
</comment>
<comment type="PTM">
    <text>N-glycosylated; contains glycans with bi- and triantennary side chains.</text>
</comment>
<comment type="similarity">
    <text evidence="3">Belongs to the serpin family.</text>
</comment>
<accession>P38030</accession>
<keyword id="KW-0011">Acute phase</keyword>
<keyword id="KW-0903">Direct protein sequencing</keyword>
<keyword id="KW-0325">Glycoprotein</keyword>
<keyword id="KW-0646">Protease inhibitor</keyword>
<keyword id="KW-1185">Reference proteome</keyword>
<keyword id="KW-0964">Secreted</keyword>
<keyword id="KW-0722">Serine protease inhibitor</keyword>
<reference key="1">
    <citation type="journal article" date="1991" name="Biochem. Genet.">
        <title>The equine major plasma serpin multigene family: partial characterization including sequence of the reactive-site regions.</title>
        <authorList>
            <person name="Patterson S.D."/>
            <person name="Bell K."/>
            <person name="Shaw D.C."/>
        </authorList>
    </citation>
    <scope>PROTEIN SEQUENCE</scope>
    <source>
        <tissue>Plasma</tissue>
    </source>
</reference>
<reference key="2">
    <citation type="journal article" date="1990" name="Biochem. Int.">
        <title>The carbohydrate side chains of the major plasma serpins of horse and wallaby: analyses of enzymatic and chemically treated (including 'Smith degradation') protein blots by lectin binding.</title>
        <authorList>
            <person name="Patterson S.D."/>
            <person name="Bell K."/>
        </authorList>
    </citation>
    <scope>STRUCTURE OF CARBOHYDRATES</scope>
</reference>
<evidence type="ECO:0000250" key="1"/>
<evidence type="ECO:0000256" key="2">
    <source>
        <dbReference type="SAM" id="MobiDB-lite"/>
    </source>
</evidence>
<evidence type="ECO:0000305" key="3"/>
<dbReference type="PIR" id="C61219">
    <property type="entry name" value="C61219"/>
</dbReference>
<dbReference type="MEROPS" id="I04.974"/>
<dbReference type="PeptideAtlas" id="P38030"/>
<dbReference type="InParanoid" id="P38030"/>
<dbReference type="Proteomes" id="UP000002281">
    <property type="component" value="Unplaced"/>
</dbReference>
<dbReference type="GO" id="GO:0005576">
    <property type="term" value="C:extracellular region"/>
    <property type="evidence" value="ECO:0007669"/>
    <property type="project" value="UniProtKB-SubCell"/>
</dbReference>
<dbReference type="GO" id="GO:0004867">
    <property type="term" value="F:serine-type endopeptidase inhibitor activity"/>
    <property type="evidence" value="ECO:0007669"/>
    <property type="project" value="UniProtKB-KW"/>
</dbReference>
<dbReference type="GO" id="GO:0006953">
    <property type="term" value="P:acute-phase response"/>
    <property type="evidence" value="ECO:0007669"/>
    <property type="project" value="UniProtKB-KW"/>
</dbReference>
<dbReference type="Gene3D" id="2.10.310.10">
    <property type="entry name" value="Serpins superfamily"/>
    <property type="match status" value="1"/>
</dbReference>
<proteinExistence type="evidence at protein level"/>
<name>A1AT3_HORSE</name>
<organism>
    <name type="scientific">Equus caballus</name>
    <name type="common">Horse</name>
    <dbReference type="NCBI Taxonomy" id="9796"/>
    <lineage>
        <taxon>Eukaryota</taxon>
        <taxon>Metazoa</taxon>
        <taxon>Chordata</taxon>
        <taxon>Craniata</taxon>
        <taxon>Vertebrata</taxon>
        <taxon>Euteleostomi</taxon>
        <taxon>Mammalia</taxon>
        <taxon>Eutheria</taxon>
        <taxon>Laurasiatheria</taxon>
        <taxon>Perissodactyla</taxon>
        <taxon>Equidae</taxon>
        <taxon>Equus</taxon>
    </lineage>
</organism>
<sequence length="52" mass="5923">EDLQGDAVPEEXATKDDNEHPQTLLLTNVEFNXRPFVLIIYDRNTKSPLFVG</sequence>
<feature type="chain" id="PRO_0000094093" description="Alpha-1-antiproteinase 3">
    <location>
        <begin position="1"/>
        <end position="52" status="greater than"/>
    </location>
</feature>
<feature type="region of interest" description="Disordered" evidence="2">
    <location>
        <begin position="1"/>
        <end position="20"/>
    </location>
</feature>
<feature type="site" description="Reactive bond">
    <location>
        <begin position="23"/>
        <end position="24"/>
    </location>
</feature>
<feature type="non-consecutive residues" evidence="3">
    <location>
        <begin position="22"/>
        <end position="23"/>
    </location>
</feature>
<feature type="non-terminal residue">
    <location>
        <position position="52"/>
    </location>
</feature>